<comment type="function">
    <text evidence="4">May have a role during differentiation processes.</text>
</comment>
<comment type="subcellular location">
    <subcellularLocation>
        <location evidence="4">Nucleus</location>
    </subcellularLocation>
</comment>
<comment type="tissue specificity">
    <text evidence="3">Expressed predominantly in the testis (at protein level).</text>
</comment>
<comment type="developmental stage">
    <text>Expression is positively regulated upon differentiation. Is specifically synthesized during postmeiotic phase of male germline differentiation.</text>
</comment>
<comment type="similarity">
    <text evidence="5">Belongs to the krueppel C2H2-type zinc-finger protein family.</text>
</comment>
<comment type="sequence caution" evidence="5">
    <conflict type="frameshift">
        <sequence resource="EMBL-CDS" id="AAA39532"/>
    </conflict>
</comment>
<comment type="sequence caution" evidence="5">
    <conflict type="miscellaneous discrepancy">
        <sequence resource="EMBL-CDS" id="AAA39532"/>
    </conflict>
    <text>Several sequencing errors.</text>
</comment>
<comment type="sequence caution" evidence="5">
    <conflict type="erroneous initiation">
        <sequence resource="EMBL-CDS" id="AAA92741"/>
    </conflict>
    <text>Truncated N-terminus.</text>
</comment>
<comment type="sequence caution" evidence="5">
    <conflict type="frameshift">
        <sequence resource="EMBL-CDS" id="AAA92741"/>
    </conflict>
</comment>
<comment type="sequence caution" evidence="5">
    <conflict type="miscellaneous discrepancy">
        <sequence resource="EMBL-CDS" id="AAA92741"/>
    </conflict>
    <text>Several sequencing errors.</text>
</comment>
<reference key="1">
    <citation type="journal article" date="2009" name="PLoS Biol.">
        <title>Lineage-specific biology revealed by a finished genome assembly of the mouse.</title>
        <authorList>
            <person name="Church D.M."/>
            <person name="Goodstadt L."/>
            <person name="Hillier L.W."/>
            <person name="Zody M.C."/>
            <person name="Goldstein S."/>
            <person name="She X."/>
            <person name="Bult C.J."/>
            <person name="Agarwala R."/>
            <person name="Cherry J.L."/>
            <person name="DiCuccio M."/>
            <person name="Hlavina W."/>
            <person name="Kapustin Y."/>
            <person name="Meric P."/>
            <person name="Maglott D."/>
            <person name="Birtle Z."/>
            <person name="Marques A.C."/>
            <person name="Graves T."/>
            <person name="Zhou S."/>
            <person name="Teague B."/>
            <person name="Potamousis K."/>
            <person name="Churas C."/>
            <person name="Place M."/>
            <person name="Herschleb J."/>
            <person name="Runnheim R."/>
            <person name="Forrest D."/>
            <person name="Amos-Landgraf J."/>
            <person name="Schwartz D.C."/>
            <person name="Cheng Z."/>
            <person name="Lindblad-Toh K."/>
            <person name="Eichler E.E."/>
            <person name="Ponting C.P."/>
        </authorList>
    </citation>
    <scope>NUCLEOTIDE SEQUENCE [LARGE SCALE GENOMIC DNA]</scope>
    <source>
        <strain>C57BL/6J</strain>
    </source>
</reference>
<reference key="2">
    <citation type="journal article" date="1995" name="Cell Growth Differ.">
        <title>The product of Zfp59 (Mfg2), a mouse gene expressed at the spermatid stage of spermatogenesis, accumulates in spermatozoa nuclei.</title>
        <authorList>
            <person name="Passananti C."/>
            <person name="Corbi N."/>
            <person name="Paggi M.G."/>
            <person name="Russo M.A."/>
            <person name="Perez M."/>
            <person name="Cotelli F."/>
            <person name="Stefanini M."/>
            <person name="Amati P."/>
        </authorList>
    </citation>
    <scope>NUCLEOTIDE SEQUENCE [MRNA] OF 27-490</scope>
    <scope>FUNCTION</scope>
    <scope>SUBCELLULAR LOCATION</scope>
    <source>
        <strain>BALB/cJ</strain>
        <tissue>Testis</tissue>
    </source>
</reference>
<reference key="3">
    <citation type="journal article" date="1989" name="Proc. Natl. Acad. Sci. U.S.A.">
        <title>Mouse genes coding for 'zinc-finger'-containing proteins: characterization and expression in differentiated cells.</title>
        <authorList>
            <person name="Passananti C."/>
            <person name="Felsani A."/>
            <person name="Caruso M."/>
            <person name="Amati P."/>
        </authorList>
    </citation>
    <scope>NUCLEOTIDE SEQUENCE [MRNA] OF 200-490</scope>
    <source>
        <strain>CD-1</strain>
        <tissue>Skeletal muscle</tissue>
    </source>
</reference>
<reference key="4">
    <citation type="journal article" date="2015" name="Biol. Reprod.">
        <title>Combining RNA and protein profiling data with network interactions identifies genes associated with spermatogenesis in mouse and human.</title>
        <authorList>
            <person name="Petit F.G."/>
            <person name="Kervarrec C."/>
            <person name="Jamin S.P."/>
            <person name="Smagulova F."/>
            <person name="Hao C."/>
            <person name="Becker E."/>
            <person name="Jegou B."/>
            <person name="Chalmel F."/>
            <person name="Primig M."/>
        </authorList>
    </citation>
    <scope>TISSUE SPECIFICITY</scope>
</reference>
<keyword id="KW-0238">DNA-binding</keyword>
<keyword id="KW-0479">Metal-binding</keyword>
<keyword id="KW-0539">Nucleus</keyword>
<keyword id="KW-1185">Reference proteome</keyword>
<keyword id="KW-0677">Repeat</keyword>
<keyword id="KW-0862">Zinc</keyword>
<keyword id="KW-0863">Zinc-finger</keyword>
<feature type="chain" id="PRO_0000047303" description="Zinc finger protein 59">
    <location>
        <begin position="1"/>
        <end position="653"/>
    </location>
</feature>
<feature type="domain" description="KRAB" evidence="2">
    <location>
        <begin position="14"/>
        <end position="86"/>
    </location>
</feature>
<feature type="zinc finger region" description="C2H2-type 1" evidence="1">
    <location>
        <begin position="172"/>
        <end position="194"/>
    </location>
</feature>
<feature type="zinc finger region" description="C2H2-type 2" evidence="1">
    <location>
        <begin position="200"/>
        <end position="222"/>
    </location>
</feature>
<feature type="zinc finger region" description="C2H2-type 3" evidence="1">
    <location>
        <begin position="256"/>
        <end position="278"/>
    </location>
</feature>
<feature type="zinc finger region" description="C2H2-type 4" evidence="1">
    <location>
        <begin position="284"/>
        <end position="306"/>
    </location>
</feature>
<feature type="zinc finger region" description="C2H2-type 5" evidence="1">
    <location>
        <begin position="312"/>
        <end position="334"/>
    </location>
</feature>
<feature type="zinc finger region" description="C2H2-type 6" evidence="1">
    <location>
        <begin position="340"/>
        <end position="362"/>
    </location>
</feature>
<feature type="zinc finger region" description="C2H2-type 7" evidence="1">
    <location>
        <begin position="368"/>
        <end position="390"/>
    </location>
</feature>
<feature type="zinc finger region" description="C2H2-type 8" evidence="1">
    <location>
        <begin position="396"/>
        <end position="418"/>
    </location>
</feature>
<feature type="zinc finger region" description="C2H2-type 9" evidence="1">
    <location>
        <begin position="424"/>
        <end position="446"/>
    </location>
</feature>
<feature type="zinc finger region" description="C2H2-type 10" evidence="1">
    <location>
        <begin position="452"/>
        <end position="474"/>
    </location>
</feature>
<feature type="zinc finger region" description="C2H2-type 11" evidence="1">
    <location>
        <begin position="480"/>
        <end position="502"/>
    </location>
</feature>
<feature type="zinc finger region" description="C2H2-type 12" evidence="1">
    <location>
        <begin position="508"/>
        <end position="530"/>
    </location>
</feature>
<feature type="zinc finger region" description="C2H2-type 13" evidence="1">
    <location>
        <begin position="536"/>
        <end position="558"/>
    </location>
</feature>
<feature type="zinc finger region" description="C2H2-type 14" evidence="1">
    <location>
        <begin position="564"/>
        <end position="586"/>
    </location>
</feature>
<feature type="zinc finger region" description="C2H2-type 15" evidence="1">
    <location>
        <begin position="592"/>
        <end position="614"/>
    </location>
</feature>
<feature type="zinc finger region" description="C2H2-type 16" evidence="1">
    <location>
        <begin position="620"/>
        <end position="642"/>
    </location>
</feature>
<accession>P16373</accession>
<accession>F8VPX4</accession>
<accession>Q61849</accession>
<proteinExistence type="evidence at protein level"/>
<gene>
    <name type="primary">Zfp59</name>
    <name type="synonym">Mfg2</name>
</gene>
<organism>
    <name type="scientific">Mus musculus</name>
    <name type="common">Mouse</name>
    <dbReference type="NCBI Taxonomy" id="10090"/>
    <lineage>
        <taxon>Eukaryota</taxon>
        <taxon>Metazoa</taxon>
        <taxon>Chordata</taxon>
        <taxon>Craniata</taxon>
        <taxon>Vertebrata</taxon>
        <taxon>Euteleostomi</taxon>
        <taxon>Mammalia</taxon>
        <taxon>Eutheria</taxon>
        <taxon>Euarchontoglires</taxon>
        <taxon>Glires</taxon>
        <taxon>Rodentia</taxon>
        <taxon>Myomorpha</taxon>
        <taxon>Muroidea</taxon>
        <taxon>Muridae</taxon>
        <taxon>Murinae</taxon>
        <taxon>Mus</taxon>
        <taxon>Mus</taxon>
    </lineage>
</organism>
<protein>
    <recommendedName>
        <fullName>Zinc finger protein 59</fullName>
        <shortName>Zfp-59</shortName>
    </recommendedName>
    <alternativeName>
        <fullName>Zinc finger protein Mfg-2</fullName>
    </alternativeName>
</protein>
<evidence type="ECO:0000255" key="1">
    <source>
        <dbReference type="PROSITE-ProRule" id="PRU00042"/>
    </source>
</evidence>
<evidence type="ECO:0000255" key="2">
    <source>
        <dbReference type="PROSITE-ProRule" id="PRU00119"/>
    </source>
</evidence>
<evidence type="ECO:0000269" key="3">
    <source>
    </source>
</evidence>
<evidence type="ECO:0000269" key="4">
    <source>
    </source>
</evidence>
<evidence type="ECO:0000305" key="5"/>
<sequence>MASTNSQDMVCGSVTFRDVAVDFSQEEWACLDATQKVLYRNIMLETYSNLVAVVGSCISKPDLIVLLEQEKEPWMAVNEETGRPSPDLEADYDAENISPQNRIYNRKFSKQSIKQLSRTFDPKGSWFSNGPNYSTFHGLRDCQSDAGQQITNKEGVPPHTCQTLAHNTEKPYECKECGKCFGCRSTLTQHQSVHTGEKPYECKECGKAFRLPQQLTRHQKCHSGEKPFSHNEGRQAFQHPNLLKYPKAIHTGAKAFACRECGKSFNRVSSLVEHGLIHADVKPYECNECGKAFKRHRSFVRHQKIHSGERPFQCKDCGKGFIVLAHLTRHQSSHSEEKPFECEECGKKFRTARHLVKHQRIHSGEKPFECNVCGSAFRLQLYLSEHQKTHMEEKYLECNVCGKAFRLQVYLSEHLKTHTEENPFKCKLCGSAFPNKYQLNKHLTVHTDGKPYQCKECGKCFRQRSKLTEHESIHTGKKPFQCEECGKFFRLNTLLIHHQKSHSGERPFECKECGKAFLLPSQLNSHKIVHTSKRPFECKVCGKSFKRESNLIQHGAVHAGVKSYECSECGKGFIHRSSLFHHRKIHSDEKPFKCQECGKAFVVLAYLIQHQSIHTGEKPFECELCGSAFRCRSQLNKHLRIHTDVKLFQCVED</sequence>
<dbReference type="EMBL" id="L16904">
    <property type="protein sequence ID" value="AAA92741.1"/>
    <property type="status" value="ALT_SEQ"/>
    <property type="molecule type" value="mRNA"/>
</dbReference>
<dbReference type="EMBL" id="M28514">
    <property type="protein sequence ID" value="AAA39532.1"/>
    <property type="status" value="ALT_SEQ"/>
    <property type="molecule type" value="mRNA"/>
</dbReference>
<dbReference type="CCDS" id="CCDS39851.1"/>
<dbReference type="PIR" id="B39240">
    <property type="entry name" value="B39240"/>
</dbReference>
<dbReference type="RefSeq" id="NP_035892.2">
    <property type="nucleotide sequence ID" value="NM_011762.4"/>
</dbReference>
<dbReference type="RefSeq" id="XP_030098254.1">
    <property type="nucleotide sequence ID" value="XM_030242394.1"/>
</dbReference>
<dbReference type="SMR" id="P16373"/>
<dbReference type="FunCoup" id="P16373">
    <property type="interactions" value="220"/>
</dbReference>
<dbReference type="STRING" id="10090.ENSMUSP00000145671"/>
<dbReference type="iPTMnet" id="P16373"/>
<dbReference type="PhosphoSitePlus" id="P16373"/>
<dbReference type="PaxDb" id="10090-ENSMUSP00000103968"/>
<dbReference type="ProteomicsDB" id="274984"/>
<dbReference type="ProteomicsDB" id="340942"/>
<dbReference type="DNASU" id="22717"/>
<dbReference type="Ensembl" id="ENSMUST00000108331.3">
    <property type="protein sequence ID" value="ENSMUSP00000103968.3"/>
    <property type="gene ID" value="ENSMUSG00000078779.5"/>
</dbReference>
<dbReference type="Ensembl" id="ENSMUST00000205701.2">
    <property type="protein sequence ID" value="ENSMUSP00000145671.2"/>
    <property type="gene ID" value="ENSMUSG00000078779.5"/>
</dbReference>
<dbReference type="GeneID" id="22717"/>
<dbReference type="KEGG" id="mmu:22717"/>
<dbReference type="AGR" id="MGI:99206"/>
<dbReference type="CTD" id="22717"/>
<dbReference type="MGI" id="MGI:99206">
    <property type="gene designation" value="Zfp59"/>
</dbReference>
<dbReference type="VEuPathDB" id="HostDB:ENSMUSG00000078779"/>
<dbReference type="eggNOG" id="KOG1721">
    <property type="taxonomic scope" value="Eukaryota"/>
</dbReference>
<dbReference type="GeneTree" id="ENSGT00940000162062"/>
<dbReference type="HOGENOM" id="CLU_002678_44_5_1"/>
<dbReference type="InParanoid" id="P16373"/>
<dbReference type="OMA" id="TYENTET"/>
<dbReference type="OrthoDB" id="9411774at2759"/>
<dbReference type="PhylomeDB" id="P16373"/>
<dbReference type="TreeFam" id="TF341817"/>
<dbReference type="BioGRID-ORCS" id="22717">
    <property type="hits" value="5 hits in 77 CRISPR screens"/>
</dbReference>
<dbReference type="PRO" id="PR:P16373"/>
<dbReference type="Proteomes" id="UP000000589">
    <property type="component" value="Chromosome 7"/>
</dbReference>
<dbReference type="RNAct" id="P16373">
    <property type="molecule type" value="protein"/>
</dbReference>
<dbReference type="Bgee" id="ENSMUSG00000078779">
    <property type="expression patterns" value="Expressed in spermatocyte and 68 other cell types or tissues"/>
</dbReference>
<dbReference type="GO" id="GO:0001673">
    <property type="term" value="C:male germ cell nucleus"/>
    <property type="evidence" value="ECO:0000314"/>
    <property type="project" value="MGI"/>
</dbReference>
<dbReference type="GO" id="GO:0003677">
    <property type="term" value="F:DNA binding"/>
    <property type="evidence" value="ECO:0007669"/>
    <property type="project" value="UniProtKB-KW"/>
</dbReference>
<dbReference type="GO" id="GO:0008270">
    <property type="term" value="F:zinc ion binding"/>
    <property type="evidence" value="ECO:0007669"/>
    <property type="project" value="UniProtKB-KW"/>
</dbReference>
<dbReference type="GO" id="GO:0006355">
    <property type="term" value="P:regulation of DNA-templated transcription"/>
    <property type="evidence" value="ECO:0007669"/>
    <property type="project" value="InterPro"/>
</dbReference>
<dbReference type="CDD" id="cd07765">
    <property type="entry name" value="KRAB_A-box"/>
    <property type="match status" value="1"/>
</dbReference>
<dbReference type="FunFam" id="3.30.160.60:FF:002858">
    <property type="match status" value="1"/>
</dbReference>
<dbReference type="FunFam" id="3.30.160.60:FF:003188">
    <property type="match status" value="1"/>
</dbReference>
<dbReference type="FunFam" id="3.30.160.60:FF:003895">
    <property type="match status" value="1"/>
</dbReference>
<dbReference type="FunFam" id="3.30.160.60:FF:004135">
    <property type="match status" value="1"/>
</dbReference>
<dbReference type="FunFam" id="3.30.160.60:FF:000040">
    <property type="entry name" value="RB associated KRAB zinc finger"/>
    <property type="match status" value="1"/>
</dbReference>
<dbReference type="FunFam" id="3.30.160.60:FF:001235">
    <property type="entry name" value="Si:ch211-119o8.6"/>
    <property type="match status" value="1"/>
</dbReference>
<dbReference type="FunFam" id="3.30.160.60:FF:000100">
    <property type="entry name" value="Zinc finger 45-like"/>
    <property type="match status" value="1"/>
</dbReference>
<dbReference type="FunFam" id="3.30.160.60:FF:003511">
    <property type="entry name" value="Zinc finger protein 114"/>
    <property type="match status" value="1"/>
</dbReference>
<dbReference type="FunFam" id="3.30.160.60:FF:000478">
    <property type="entry name" value="Zinc finger protein 133"/>
    <property type="match status" value="1"/>
</dbReference>
<dbReference type="FunFam" id="3.30.160.60:FF:000020">
    <property type="entry name" value="Zinc finger protein 14 homolog"/>
    <property type="match status" value="1"/>
</dbReference>
<dbReference type="FunFam" id="3.30.160.60:FF:000053">
    <property type="entry name" value="zinc finger protein 182 isoform X1"/>
    <property type="match status" value="1"/>
</dbReference>
<dbReference type="FunFam" id="3.30.160.60:FF:000688">
    <property type="entry name" value="zinc finger protein 197 isoform X1"/>
    <property type="match status" value="1"/>
</dbReference>
<dbReference type="FunFam" id="3.30.160.60:FF:000204">
    <property type="entry name" value="Zinc finger protein 331"/>
    <property type="match status" value="1"/>
</dbReference>
<dbReference type="FunFam" id="3.30.160.60:FF:000443">
    <property type="entry name" value="Zinc finger protein 41"/>
    <property type="match status" value="1"/>
</dbReference>
<dbReference type="FunFam" id="3.30.160.60:FF:002729">
    <property type="entry name" value="Zinc finger protein 546"/>
    <property type="match status" value="1"/>
</dbReference>
<dbReference type="FunFam" id="3.30.160.60:FF:001270">
    <property type="entry name" value="zinc finger protein 583 isoform X1"/>
    <property type="match status" value="1"/>
</dbReference>
<dbReference type="Gene3D" id="6.10.140.140">
    <property type="match status" value="1"/>
</dbReference>
<dbReference type="Gene3D" id="3.30.160.60">
    <property type="entry name" value="Classic Zinc Finger"/>
    <property type="match status" value="16"/>
</dbReference>
<dbReference type="InterPro" id="IPR001909">
    <property type="entry name" value="KRAB"/>
</dbReference>
<dbReference type="InterPro" id="IPR036051">
    <property type="entry name" value="KRAB_dom_sf"/>
</dbReference>
<dbReference type="InterPro" id="IPR036236">
    <property type="entry name" value="Znf_C2H2_sf"/>
</dbReference>
<dbReference type="InterPro" id="IPR013087">
    <property type="entry name" value="Znf_C2H2_type"/>
</dbReference>
<dbReference type="PANTHER" id="PTHR24381">
    <property type="entry name" value="ZINC FINGER PROTEIN"/>
    <property type="match status" value="1"/>
</dbReference>
<dbReference type="PANTHER" id="PTHR24381:SF390">
    <property type="entry name" value="ZINC FINGER PROTEIN 37 HOMOLOG"/>
    <property type="match status" value="1"/>
</dbReference>
<dbReference type="Pfam" id="PF01352">
    <property type="entry name" value="KRAB"/>
    <property type="match status" value="1"/>
</dbReference>
<dbReference type="Pfam" id="PF00096">
    <property type="entry name" value="zf-C2H2"/>
    <property type="match status" value="14"/>
</dbReference>
<dbReference type="SMART" id="SM00349">
    <property type="entry name" value="KRAB"/>
    <property type="match status" value="1"/>
</dbReference>
<dbReference type="SMART" id="SM00355">
    <property type="entry name" value="ZnF_C2H2"/>
    <property type="match status" value="16"/>
</dbReference>
<dbReference type="SUPFAM" id="SSF57667">
    <property type="entry name" value="beta-beta-alpha zinc fingers"/>
    <property type="match status" value="9"/>
</dbReference>
<dbReference type="SUPFAM" id="SSF109640">
    <property type="entry name" value="KRAB domain (Kruppel-associated box)"/>
    <property type="match status" value="1"/>
</dbReference>
<dbReference type="PROSITE" id="PS50805">
    <property type="entry name" value="KRAB"/>
    <property type="match status" value="1"/>
</dbReference>
<dbReference type="PROSITE" id="PS00028">
    <property type="entry name" value="ZINC_FINGER_C2H2_1"/>
    <property type="match status" value="16"/>
</dbReference>
<dbReference type="PROSITE" id="PS50157">
    <property type="entry name" value="ZINC_FINGER_C2H2_2"/>
    <property type="match status" value="16"/>
</dbReference>
<name>ZFP59_MOUSE</name>